<protein>
    <recommendedName>
        <fullName>Probable RNA 2'-phosphotransferase 1</fullName>
        <ecNumber>2.7.1.-</ecNumber>
    </recommendedName>
</protein>
<dbReference type="EC" id="2.7.1.-"/>
<dbReference type="EMBL" id="AE000782">
    <property type="protein sequence ID" value="AAB90829.1"/>
    <property type="molecule type" value="Genomic_DNA"/>
</dbReference>
<dbReference type="PIR" id="F69300">
    <property type="entry name" value="F69300"/>
</dbReference>
<dbReference type="RefSeq" id="WP_010877913.1">
    <property type="nucleotide sequence ID" value="NC_000917.1"/>
</dbReference>
<dbReference type="SMR" id="O29841"/>
<dbReference type="STRING" id="224325.AF_0406"/>
<dbReference type="PaxDb" id="224325-AF_0406"/>
<dbReference type="DNASU" id="1483622"/>
<dbReference type="EnsemblBacteria" id="AAB90829">
    <property type="protein sequence ID" value="AAB90829"/>
    <property type="gene ID" value="AF_0406"/>
</dbReference>
<dbReference type="KEGG" id="afu:AF_0406"/>
<dbReference type="eggNOG" id="arCOG04063">
    <property type="taxonomic scope" value="Archaea"/>
</dbReference>
<dbReference type="HOGENOM" id="CLU_052998_4_1_2"/>
<dbReference type="OrthoDB" id="24376at2157"/>
<dbReference type="PhylomeDB" id="O29841"/>
<dbReference type="BRENDA" id="2.7.1.160">
    <property type="organism ID" value="414"/>
</dbReference>
<dbReference type="Proteomes" id="UP000002199">
    <property type="component" value="Chromosome"/>
</dbReference>
<dbReference type="GO" id="GO:0003950">
    <property type="term" value="F:NAD+ poly-ADP-ribosyltransferase activity"/>
    <property type="evidence" value="ECO:0007669"/>
    <property type="project" value="InterPro"/>
</dbReference>
<dbReference type="GO" id="GO:0000215">
    <property type="term" value="F:tRNA 2'-phosphotransferase activity"/>
    <property type="evidence" value="ECO:0007669"/>
    <property type="project" value="TreeGrafter"/>
</dbReference>
<dbReference type="GO" id="GO:0006388">
    <property type="term" value="P:tRNA splicing, via endonucleolytic cleavage and ligation"/>
    <property type="evidence" value="ECO:0007669"/>
    <property type="project" value="UniProtKB-UniRule"/>
</dbReference>
<dbReference type="Gene3D" id="3.20.170.30">
    <property type="match status" value="1"/>
</dbReference>
<dbReference type="Gene3D" id="1.10.10.970">
    <property type="entry name" value="RNA 2'-phosphotransferase, Tpt1/KptA family, N-terminal domain"/>
    <property type="match status" value="1"/>
</dbReference>
<dbReference type="HAMAP" id="MF_00299">
    <property type="entry name" value="KptA"/>
    <property type="match status" value="1"/>
</dbReference>
<dbReference type="InterPro" id="IPR002745">
    <property type="entry name" value="Ptrans_KptA/Tpt1"/>
</dbReference>
<dbReference type="InterPro" id="IPR042081">
    <property type="entry name" value="RNA_2'-PTrans_C"/>
</dbReference>
<dbReference type="InterPro" id="IPR022928">
    <property type="entry name" value="RNA_2'-PTrans_KptA"/>
</dbReference>
<dbReference type="InterPro" id="IPR042080">
    <property type="entry name" value="RNA_2'-PTrans_N"/>
</dbReference>
<dbReference type="NCBIfam" id="NF002015">
    <property type="entry name" value="PRK00819.1-5"/>
    <property type="match status" value="1"/>
</dbReference>
<dbReference type="PANTHER" id="PTHR12684">
    <property type="entry name" value="PUTATIVE PHOSPHOTRANSFERASE"/>
    <property type="match status" value="1"/>
</dbReference>
<dbReference type="PANTHER" id="PTHR12684:SF2">
    <property type="entry name" value="TRNA 2'-PHOSPHOTRANSFERASE 1"/>
    <property type="match status" value="1"/>
</dbReference>
<dbReference type="Pfam" id="PF01885">
    <property type="entry name" value="PTS_2-RNA"/>
    <property type="match status" value="1"/>
</dbReference>
<dbReference type="SUPFAM" id="SSF56399">
    <property type="entry name" value="ADP-ribosylation"/>
    <property type="match status" value="1"/>
</dbReference>
<reference key="1">
    <citation type="journal article" date="1997" name="Nature">
        <title>The complete genome sequence of the hyperthermophilic, sulphate-reducing archaeon Archaeoglobus fulgidus.</title>
        <authorList>
            <person name="Klenk H.-P."/>
            <person name="Clayton R.A."/>
            <person name="Tomb J.-F."/>
            <person name="White O."/>
            <person name="Nelson K.E."/>
            <person name="Ketchum K.A."/>
            <person name="Dodson R.J."/>
            <person name="Gwinn M.L."/>
            <person name="Hickey E.K."/>
            <person name="Peterson J.D."/>
            <person name="Richardson D.L."/>
            <person name="Kerlavage A.R."/>
            <person name="Graham D.E."/>
            <person name="Kyrpides N.C."/>
            <person name="Fleischmann R.D."/>
            <person name="Quackenbush J."/>
            <person name="Lee N.H."/>
            <person name="Sutton G.G."/>
            <person name="Gill S.R."/>
            <person name="Kirkness E.F."/>
            <person name="Dougherty B.A."/>
            <person name="McKenney K."/>
            <person name="Adams M.D."/>
            <person name="Loftus B.J."/>
            <person name="Peterson S.N."/>
            <person name="Reich C.I."/>
            <person name="McNeil L.K."/>
            <person name="Badger J.H."/>
            <person name="Glodek A."/>
            <person name="Zhou L."/>
            <person name="Overbeek R."/>
            <person name="Gocayne J.D."/>
            <person name="Weidman J.F."/>
            <person name="McDonald L.A."/>
            <person name="Utterback T.R."/>
            <person name="Cotton M.D."/>
            <person name="Spriggs T."/>
            <person name="Artiach P."/>
            <person name="Kaine B.P."/>
            <person name="Sykes S.M."/>
            <person name="Sadow P.W."/>
            <person name="D'Andrea K.P."/>
            <person name="Bowman C."/>
            <person name="Fujii C."/>
            <person name="Garland S.A."/>
            <person name="Mason T.M."/>
            <person name="Olsen G.J."/>
            <person name="Fraser C.M."/>
            <person name="Smith H.O."/>
            <person name="Woese C.R."/>
            <person name="Venter J.C."/>
        </authorList>
    </citation>
    <scope>NUCLEOTIDE SEQUENCE [LARGE SCALE GENOMIC DNA]</scope>
    <source>
        <strain>ATCC 49558 / DSM 4304 / JCM 9628 / NBRC 100126 / VC-16</strain>
    </source>
</reference>
<comment type="function">
    <text evidence="1">Removes the 2'-phosphate from RNA via an intermediate in which the phosphate is ADP-ribosylated by NAD followed by a presumed transesterification to release the RNA and generate ADP-ribose 1''-2''-cyclic phosphate (APPR&gt;P). May function as an ADP-ribosylase (By similarity).</text>
</comment>
<comment type="similarity">
    <text evidence="2">Belongs to the KptA/TPT1 family.</text>
</comment>
<evidence type="ECO:0000250" key="1"/>
<evidence type="ECO:0000305" key="2"/>
<feature type="chain" id="PRO_0000157485" description="Probable RNA 2'-phosphotransferase 1">
    <location>
        <begin position="1"/>
        <end position="216"/>
    </location>
</feature>
<proteinExistence type="inferred from homology"/>
<gene>
    <name type="primary">kptA1</name>
    <name type="ordered locus">AF_0406</name>
</gene>
<name>KPTA1_ARCFU</name>
<organism>
    <name type="scientific">Archaeoglobus fulgidus (strain ATCC 49558 / DSM 4304 / JCM 9628 / NBRC 100126 / VC-16)</name>
    <dbReference type="NCBI Taxonomy" id="224325"/>
    <lineage>
        <taxon>Archaea</taxon>
        <taxon>Methanobacteriati</taxon>
        <taxon>Methanobacteriota</taxon>
        <taxon>Archaeoglobi</taxon>
        <taxon>Archaeoglobales</taxon>
        <taxon>Archaeoglobaceae</taxon>
        <taxon>Archaeoglobus</taxon>
    </lineage>
</organism>
<sequence>MEEIRFCPEHGFYRGEKCRCGAEGELILPKEKVEKLGKFISGVLRHFPDKFGLNMDENGWVNLESLARVVKRRYKWANIWLIKALVYSDEKQRYELKGDKIRARYGHSIDVKLSDFPEAKEDVLYYGTSEEEAHRMLEIGIKPVNQRYVHLSTTIEKSKEVASIRTDTPIVLEIDAKKAREDGIRIIKANDLIALAEEIPAKYIKRQIVFNQYSSS</sequence>
<accession>O29841</accession>
<keyword id="KW-0520">NAD</keyword>
<keyword id="KW-1185">Reference proteome</keyword>
<keyword id="KW-0808">Transferase</keyword>